<organism>
    <name type="scientific">Ureaplasma parvum serovar 3 (strain ATCC 27815 / 27 / NCTC 11736)</name>
    <dbReference type="NCBI Taxonomy" id="505682"/>
    <lineage>
        <taxon>Bacteria</taxon>
        <taxon>Bacillati</taxon>
        <taxon>Mycoplasmatota</taxon>
        <taxon>Mycoplasmoidales</taxon>
        <taxon>Mycoplasmoidaceae</taxon>
        <taxon>Ureaplasma</taxon>
    </lineage>
</organism>
<accession>B1AJ32</accession>
<dbReference type="EC" id="2.7.8.7" evidence="1"/>
<dbReference type="EMBL" id="CP000942">
    <property type="protein sequence ID" value="ACA33270.1"/>
    <property type="molecule type" value="Genomic_DNA"/>
</dbReference>
<dbReference type="RefSeq" id="WP_006688628.1">
    <property type="nucleotide sequence ID" value="NC_010503.1"/>
</dbReference>
<dbReference type="SMR" id="B1AJ32"/>
<dbReference type="GeneID" id="29672660"/>
<dbReference type="KEGG" id="upa:UPA3_0409"/>
<dbReference type="HOGENOM" id="CLU_089696_1_1_14"/>
<dbReference type="Proteomes" id="UP000002162">
    <property type="component" value="Chromosome"/>
</dbReference>
<dbReference type="GO" id="GO:0005737">
    <property type="term" value="C:cytoplasm"/>
    <property type="evidence" value="ECO:0007669"/>
    <property type="project" value="UniProtKB-SubCell"/>
</dbReference>
<dbReference type="GO" id="GO:0008897">
    <property type="term" value="F:holo-[acyl-carrier-protein] synthase activity"/>
    <property type="evidence" value="ECO:0007669"/>
    <property type="project" value="UniProtKB-UniRule"/>
</dbReference>
<dbReference type="GO" id="GO:0000287">
    <property type="term" value="F:magnesium ion binding"/>
    <property type="evidence" value="ECO:0007669"/>
    <property type="project" value="UniProtKB-UniRule"/>
</dbReference>
<dbReference type="GO" id="GO:0006633">
    <property type="term" value="P:fatty acid biosynthetic process"/>
    <property type="evidence" value="ECO:0007669"/>
    <property type="project" value="UniProtKB-UniRule"/>
</dbReference>
<dbReference type="Gene3D" id="3.90.470.20">
    <property type="entry name" value="4'-phosphopantetheinyl transferase domain"/>
    <property type="match status" value="1"/>
</dbReference>
<dbReference type="HAMAP" id="MF_00101">
    <property type="entry name" value="AcpS"/>
    <property type="match status" value="1"/>
</dbReference>
<dbReference type="InterPro" id="IPR008278">
    <property type="entry name" value="4-PPantetheinyl_Trfase_dom"/>
</dbReference>
<dbReference type="InterPro" id="IPR037143">
    <property type="entry name" value="4-PPantetheinyl_Trfase_dom_sf"/>
</dbReference>
<dbReference type="InterPro" id="IPR002582">
    <property type="entry name" value="ACPS"/>
</dbReference>
<dbReference type="NCBIfam" id="NF011252">
    <property type="entry name" value="PRK14658.1"/>
    <property type="match status" value="1"/>
</dbReference>
<dbReference type="Pfam" id="PF01648">
    <property type="entry name" value="ACPS"/>
    <property type="match status" value="1"/>
</dbReference>
<dbReference type="SUPFAM" id="SSF56214">
    <property type="entry name" value="4'-phosphopantetheinyl transferase"/>
    <property type="match status" value="1"/>
</dbReference>
<feature type="chain" id="PRO_1000075667" description="Holo-[acyl-carrier-protein] synthase">
    <location>
        <begin position="1"/>
        <end position="115"/>
    </location>
</feature>
<feature type="binding site" evidence="1">
    <location>
        <position position="8"/>
    </location>
    <ligand>
        <name>Mg(2+)</name>
        <dbReference type="ChEBI" id="CHEBI:18420"/>
    </ligand>
</feature>
<feature type="binding site" evidence="1">
    <location>
        <position position="56"/>
    </location>
    <ligand>
        <name>Mg(2+)</name>
        <dbReference type="ChEBI" id="CHEBI:18420"/>
    </ligand>
</feature>
<reference key="1">
    <citation type="submission" date="2008-02" db="EMBL/GenBank/DDBJ databases">
        <title>Genome sequence of Ureaplasma parvum serovar 3.</title>
        <authorList>
            <person name="Methe B.A."/>
            <person name="Glass J."/>
            <person name="Waites K."/>
            <person name="Shrivastava S."/>
        </authorList>
    </citation>
    <scope>NUCLEOTIDE SEQUENCE [LARGE SCALE GENOMIC DNA]</scope>
    <source>
        <strain>ATCC 27815 / 27 / NCTC 11736</strain>
    </source>
</reference>
<name>ACPS_UREP2</name>
<evidence type="ECO:0000255" key="1">
    <source>
        <dbReference type="HAMAP-Rule" id="MF_00101"/>
    </source>
</evidence>
<sequence>MKLVHGIDIIEWNREELNNPLFAKRILIDNELEYYFQLNSSREKKRYLASVFACKEAVMKALKLKYGYGDILILKTENQRQVYLNKILIKELELSISYTETYIVASVVGLINNMN</sequence>
<comment type="function">
    <text evidence="1">Transfers the 4'-phosphopantetheine moiety from coenzyme A to a Ser of acyl-carrier-protein.</text>
</comment>
<comment type="catalytic activity">
    <reaction evidence="1">
        <text>apo-[ACP] + CoA = holo-[ACP] + adenosine 3',5'-bisphosphate + H(+)</text>
        <dbReference type="Rhea" id="RHEA:12068"/>
        <dbReference type="Rhea" id="RHEA-COMP:9685"/>
        <dbReference type="Rhea" id="RHEA-COMP:9690"/>
        <dbReference type="ChEBI" id="CHEBI:15378"/>
        <dbReference type="ChEBI" id="CHEBI:29999"/>
        <dbReference type="ChEBI" id="CHEBI:57287"/>
        <dbReference type="ChEBI" id="CHEBI:58343"/>
        <dbReference type="ChEBI" id="CHEBI:64479"/>
        <dbReference type="EC" id="2.7.8.7"/>
    </reaction>
</comment>
<comment type="cofactor">
    <cofactor evidence="1">
        <name>Mg(2+)</name>
        <dbReference type="ChEBI" id="CHEBI:18420"/>
    </cofactor>
</comment>
<comment type="subcellular location">
    <subcellularLocation>
        <location evidence="1">Cytoplasm</location>
    </subcellularLocation>
</comment>
<comment type="similarity">
    <text evidence="1">Belongs to the P-Pant transferase superfamily. AcpS family.</text>
</comment>
<keyword id="KW-0963">Cytoplasm</keyword>
<keyword id="KW-0275">Fatty acid biosynthesis</keyword>
<keyword id="KW-0276">Fatty acid metabolism</keyword>
<keyword id="KW-0444">Lipid biosynthesis</keyword>
<keyword id="KW-0443">Lipid metabolism</keyword>
<keyword id="KW-0460">Magnesium</keyword>
<keyword id="KW-0479">Metal-binding</keyword>
<keyword id="KW-0808">Transferase</keyword>
<protein>
    <recommendedName>
        <fullName evidence="1">Holo-[acyl-carrier-protein] synthase</fullName>
        <shortName evidence="1">Holo-ACP synthase</shortName>
        <ecNumber evidence="1">2.7.8.7</ecNumber>
    </recommendedName>
    <alternativeName>
        <fullName evidence="1">4'-phosphopantetheinyl transferase AcpS</fullName>
    </alternativeName>
</protein>
<gene>
    <name evidence="1" type="primary">acpS</name>
    <name type="ordered locus">UPA3_0409</name>
</gene>
<proteinExistence type="inferred from homology"/>